<proteinExistence type="evidence at transcript level"/>
<evidence type="ECO:0000250" key="1"/>
<evidence type="ECO:0000256" key="2">
    <source>
        <dbReference type="SAM" id="MobiDB-lite"/>
    </source>
</evidence>
<evidence type="ECO:0000269" key="3">
    <source>
    </source>
</evidence>
<evidence type="ECO:0000305" key="4"/>
<organism>
    <name type="scientific">Arabidopsis thaliana</name>
    <name type="common">Mouse-ear cress</name>
    <dbReference type="NCBI Taxonomy" id="3702"/>
    <lineage>
        <taxon>Eukaryota</taxon>
        <taxon>Viridiplantae</taxon>
        <taxon>Streptophyta</taxon>
        <taxon>Embryophyta</taxon>
        <taxon>Tracheophyta</taxon>
        <taxon>Spermatophyta</taxon>
        <taxon>Magnoliopsida</taxon>
        <taxon>eudicotyledons</taxon>
        <taxon>Gunneridae</taxon>
        <taxon>Pentapetalae</taxon>
        <taxon>rosids</taxon>
        <taxon>malvids</taxon>
        <taxon>Brassicales</taxon>
        <taxon>Brassicaceae</taxon>
        <taxon>Camelineae</taxon>
        <taxon>Arabidopsis</taxon>
    </lineage>
</organism>
<name>EF4L1_ARATH</name>
<keyword id="KW-0090">Biological rhythms</keyword>
<keyword id="KW-0539">Nucleus</keyword>
<keyword id="KW-1185">Reference proteome</keyword>
<gene>
    <name type="primary">EFL1</name>
    <name type="synonym">ELF4-L1</name>
    <name type="ordered locus">At2g29950</name>
    <name type="ORF">F23F1.13</name>
</gene>
<reference key="1">
    <citation type="journal article" date="1999" name="Nature">
        <title>Sequence and analysis of chromosome 2 of the plant Arabidopsis thaliana.</title>
        <authorList>
            <person name="Lin X."/>
            <person name="Kaul S."/>
            <person name="Rounsley S.D."/>
            <person name="Shea T.P."/>
            <person name="Benito M.-I."/>
            <person name="Town C.D."/>
            <person name="Fujii C.Y."/>
            <person name="Mason T.M."/>
            <person name="Bowman C.L."/>
            <person name="Barnstead M.E."/>
            <person name="Feldblyum T.V."/>
            <person name="Buell C.R."/>
            <person name="Ketchum K.A."/>
            <person name="Lee J.J."/>
            <person name="Ronning C.M."/>
            <person name="Koo H.L."/>
            <person name="Moffat K.S."/>
            <person name="Cronin L.A."/>
            <person name="Shen M."/>
            <person name="Pai G."/>
            <person name="Van Aken S."/>
            <person name="Umayam L."/>
            <person name="Tallon L.J."/>
            <person name="Gill J.E."/>
            <person name="Adams M.D."/>
            <person name="Carrera A.J."/>
            <person name="Creasy T.H."/>
            <person name="Goodman H.M."/>
            <person name="Somerville C.R."/>
            <person name="Copenhaver G.P."/>
            <person name="Preuss D."/>
            <person name="Nierman W.C."/>
            <person name="White O."/>
            <person name="Eisen J.A."/>
            <person name="Salzberg S.L."/>
            <person name="Fraser C.M."/>
            <person name="Venter J.C."/>
        </authorList>
    </citation>
    <scope>NUCLEOTIDE SEQUENCE [LARGE SCALE GENOMIC DNA]</scope>
    <source>
        <strain>cv. Columbia</strain>
    </source>
</reference>
<reference key="2">
    <citation type="journal article" date="2017" name="Plant J.">
        <title>Araport11: a complete reannotation of the Arabidopsis thaliana reference genome.</title>
        <authorList>
            <person name="Cheng C.Y."/>
            <person name="Krishnakumar V."/>
            <person name="Chan A.P."/>
            <person name="Thibaud-Nissen F."/>
            <person name="Schobel S."/>
            <person name="Town C.D."/>
        </authorList>
    </citation>
    <scope>GENOME REANNOTATION</scope>
    <source>
        <strain>cv. Columbia</strain>
    </source>
</reference>
<reference key="3">
    <citation type="submission" date="2005-03" db="EMBL/GenBank/DDBJ databases">
        <authorList>
            <person name="Underwood B.A."/>
            <person name="Xiao Y.-L."/>
            <person name="Moskal W.A. Jr."/>
            <person name="Monaghan E.L."/>
            <person name="Wang W."/>
            <person name="Redman J.C."/>
            <person name="Wu H.C."/>
            <person name="Utterback T."/>
            <person name="Town C.D."/>
        </authorList>
    </citation>
    <scope>NUCLEOTIDE SEQUENCE [LARGE SCALE GENOMIC DNA]</scope>
    <source>
        <strain>cv. Columbia</strain>
    </source>
</reference>
<reference key="4">
    <citation type="journal article" date="2005" name="Plant Physiol.">
        <title>Analysis of the cDNAs of hypothetical genes on Arabidopsis chromosome 2 reveals numerous transcript variants.</title>
        <authorList>
            <person name="Xiao Y.-L."/>
            <person name="Smith S.R."/>
            <person name="Ishmael N."/>
            <person name="Redman J.C."/>
            <person name="Kumar N."/>
            <person name="Monaghan E.L."/>
            <person name="Ayele M."/>
            <person name="Haas B.J."/>
            <person name="Wu H.C."/>
            <person name="Town C.D."/>
        </authorList>
    </citation>
    <scope>NUCLEOTIDE SEQUENCE [LARGE SCALE MRNA]</scope>
    <source>
        <strain>cv. Columbia</strain>
    </source>
</reference>
<reference key="5">
    <citation type="journal article" date="2003" name="Plant Physiol.">
        <title>EARLY FLOWERING 4 functions in phytochrome B-regulated seedling de-etiolation.</title>
        <authorList>
            <person name="Khanna R."/>
            <person name="Kikis E.A."/>
            <person name="Quail P.H."/>
        </authorList>
    </citation>
    <scope>GENE FAMILY</scope>
</reference>
<reference key="6">
    <citation type="journal article" date="2009" name="HFSP J.">
        <title>Integrating ELF4 into the circadian system through combined structural and functional studies.</title>
        <authorList>
            <person name="Kolmos E."/>
            <person name="Nowak M."/>
            <person name="Werner M."/>
            <person name="Fischer K."/>
            <person name="Schwarz G."/>
            <person name="Mathews S."/>
            <person name="Schoof H."/>
            <person name="Nagy F."/>
            <person name="Bujnicki J.M."/>
            <person name="Davis S.J."/>
        </authorList>
    </citation>
    <scope>FUNCTION</scope>
    <scope>GENE FAMILY</scope>
    <scope>NOMENCLATURE</scope>
</reference>
<protein>
    <recommendedName>
        <fullName>Protein ELF4-LIKE 1</fullName>
    </recommendedName>
</protein>
<feature type="chain" id="PRO_0000408503" description="Protein ELF4-LIKE 1">
    <location>
        <begin position="1"/>
        <end position="125"/>
    </location>
</feature>
<feature type="region of interest" description="Disordered" evidence="2">
    <location>
        <begin position="1"/>
        <end position="28"/>
    </location>
</feature>
<feature type="compositionally biased region" description="Polar residues" evidence="2">
    <location>
        <begin position="1"/>
        <end position="18"/>
    </location>
</feature>
<dbReference type="EMBL" id="AC004680">
    <property type="protein sequence ID" value="AAC31857.1"/>
    <property type="molecule type" value="Genomic_DNA"/>
</dbReference>
<dbReference type="EMBL" id="CP002685">
    <property type="protein sequence ID" value="AEC08326.1"/>
    <property type="molecule type" value="Genomic_DNA"/>
</dbReference>
<dbReference type="EMBL" id="AY954806">
    <property type="protein sequence ID" value="AAX55132.1"/>
    <property type="molecule type" value="Genomic_DNA"/>
</dbReference>
<dbReference type="EMBL" id="AY648325">
    <property type="protein sequence ID" value="AAT68736.1"/>
    <property type="molecule type" value="mRNA"/>
</dbReference>
<dbReference type="PIR" id="T02490">
    <property type="entry name" value="T02490"/>
</dbReference>
<dbReference type="RefSeq" id="NP_180556.1">
    <property type="nucleotide sequence ID" value="NM_128549.3"/>
</dbReference>
<dbReference type="SMR" id="O80877"/>
<dbReference type="STRING" id="3702.O80877"/>
<dbReference type="PaxDb" id="3702-AT2G29950.1"/>
<dbReference type="ProteomicsDB" id="247079"/>
<dbReference type="EnsemblPlants" id="AT2G29950.1">
    <property type="protein sequence ID" value="AT2G29950.1"/>
    <property type="gene ID" value="AT2G29950"/>
</dbReference>
<dbReference type="GeneID" id="817545"/>
<dbReference type="Gramene" id="AT2G29950.1">
    <property type="protein sequence ID" value="AT2G29950.1"/>
    <property type="gene ID" value="AT2G29950"/>
</dbReference>
<dbReference type="KEGG" id="ath:AT2G29950"/>
<dbReference type="Araport" id="AT2G29950"/>
<dbReference type="TAIR" id="AT2G29950">
    <property type="gene designation" value="ELF4-L1"/>
</dbReference>
<dbReference type="HOGENOM" id="CLU_119738_2_0_1"/>
<dbReference type="InParanoid" id="O80877"/>
<dbReference type="OMA" id="EVNRNHE"/>
<dbReference type="PhylomeDB" id="O80877"/>
<dbReference type="PRO" id="PR:O80877"/>
<dbReference type="Proteomes" id="UP000006548">
    <property type="component" value="Chromosome 2"/>
</dbReference>
<dbReference type="ExpressionAtlas" id="O80877">
    <property type="expression patterns" value="differential"/>
</dbReference>
<dbReference type="GO" id="GO:0005634">
    <property type="term" value="C:nucleus"/>
    <property type="evidence" value="ECO:0000250"/>
    <property type="project" value="UniProtKB"/>
</dbReference>
<dbReference type="GO" id="GO:0042803">
    <property type="term" value="F:protein homodimerization activity"/>
    <property type="evidence" value="ECO:0000250"/>
    <property type="project" value="UniProtKB"/>
</dbReference>
<dbReference type="GO" id="GO:0042753">
    <property type="term" value="P:positive regulation of circadian rhythm"/>
    <property type="evidence" value="ECO:0000315"/>
    <property type="project" value="UniProtKB"/>
</dbReference>
<dbReference type="GO" id="GO:0048511">
    <property type="term" value="P:rhythmic process"/>
    <property type="evidence" value="ECO:0007669"/>
    <property type="project" value="UniProtKB-KW"/>
</dbReference>
<dbReference type="InterPro" id="IPR040462">
    <property type="entry name" value="EARLY_FLOWERING_4"/>
</dbReference>
<dbReference type="InterPro" id="IPR009741">
    <property type="entry name" value="EARLY_FLOWERING_4_dom"/>
</dbReference>
<dbReference type="PANTHER" id="PTHR33469:SF1">
    <property type="entry name" value="PROTEIN ELF4-LIKE 1"/>
    <property type="match status" value="1"/>
</dbReference>
<dbReference type="PANTHER" id="PTHR33469">
    <property type="entry name" value="PROTEIN ELF4-LIKE 4"/>
    <property type="match status" value="1"/>
</dbReference>
<dbReference type="Pfam" id="PF07011">
    <property type="entry name" value="Elf4"/>
    <property type="match status" value="1"/>
</dbReference>
<comment type="function">
    <text evidence="3">Component of the central CCA1/LHY-TOC1 feedback loop in the circadian clock that promotes clock accuracy and is required for sustained rhythms in the absence of daily light/dark cycles.</text>
</comment>
<comment type="subunit">
    <text evidence="1">Homodimer.</text>
</comment>
<comment type="subcellular location">
    <subcellularLocation>
        <location evidence="1">Nucleus</location>
    </subcellularLocation>
</comment>
<comment type="similarity">
    <text evidence="4">Belongs to the EARLY FLOWERING 4 family.</text>
</comment>
<accession>O80877</accession>
<sequence length="125" mass="14080">MEASRNRSLVGNNRSPEMNENDGEDVAASAAVEDVEVWDTLSNGFKRAQLYLDQNRDLIQRVNENHMSRIPDNVSRNVGLINEINGNISQVMEIYSDLSLNFAKKFDQRRRTTKDGDTTTTTTGS</sequence>